<comment type="function">
    <text evidence="1">Involved in mRNA degradation. Catalyzes the phosphorolysis of single-stranded polyribonucleotides processively in the 3'- to 5'-direction.</text>
</comment>
<comment type="catalytic activity">
    <reaction evidence="1">
        <text>RNA(n+1) + phosphate = RNA(n) + a ribonucleoside 5'-diphosphate</text>
        <dbReference type="Rhea" id="RHEA:22096"/>
        <dbReference type="Rhea" id="RHEA-COMP:14527"/>
        <dbReference type="Rhea" id="RHEA-COMP:17342"/>
        <dbReference type="ChEBI" id="CHEBI:43474"/>
        <dbReference type="ChEBI" id="CHEBI:57930"/>
        <dbReference type="ChEBI" id="CHEBI:140395"/>
        <dbReference type="EC" id="2.7.7.8"/>
    </reaction>
</comment>
<comment type="cofactor">
    <cofactor evidence="1">
        <name>Mg(2+)</name>
        <dbReference type="ChEBI" id="CHEBI:18420"/>
    </cofactor>
</comment>
<comment type="subcellular location">
    <subcellularLocation>
        <location evidence="1">Cytoplasm</location>
    </subcellularLocation>
</comment>
<comment type="similarity">
    <text evidence="1">Belongs to the polyribonucleotide nucleotidyltransferase family.</text>
</comment>
<reference key="1">
    <citation type="journal article" date="2007" name="PLoS Genet.">
        <title>A tale of two oxidation states: bacterial colonization of arsenic-rich environments.</title>
        <authorList>
            <person name="Muller D."/>
            <person name="Medigue C."/>
            <person name="Koechler S."/>
            <person name="Barbe V."/>
            <person name="Barakat M."/>
            <person name="Talla E."/>
            <person name="Bonnefoy V."/>
            <person name="Krin E."/>
            <person name="Arsene-Ploetze F."/>
            <person name="Carapito C."/>
            <person name="Chandler M."/>
            <person name="Cournoyer B."/>
            <person name="Cruveiller S."/>
            <person name="Dossat C."/>
            <person name="Duval S."/>
            <person name="Heymann M."/>
            <person name="Leize E."/>
            <person name="Lieutaud A."/>
            <person name="Lievremont D."/>
            <person name="Makita Y."/>
            <person name="Mangenot S."/>
            <person name="Nitschke W."/>
            <person name="Ortet P."/>
            <person name="Perdrial N."/>
            <person name="Schoepp B."/>
            <person name="Siguier P."/>
            <person name="Simeonova D.D."/>
            <person name="Rouy Z."/>
            <person name="Segurens B."/>
            <person name="Turlin E."/>
            <person name="Vallenet D."/>
            <person name="van Dorsselaer A."/>
            <person name="Weiss S."/>
            <person name="Weissenbach J."/>
            <person name="Lett M.-C."/>
            <person name="Danchin A."/>
            <person name="Bertin P.N."/>
        </authorList>
    </citation>
    <scope>NUCLEOTIDE SEQUENCE [LARGE SCALE GENOMIC DNA]</scope>
    <source>
        <strain>ULPAs1</strain>
    </source>
</reference>
<gene>
    <name evidence="1" type="primary">pnp</name>
    <name type="ordered locus">HEAR1829</name>
</gene>
<organism>
    <name type="scientific">Herminiimonas arsenicoxydans</name>
    <dbReference type="NCBI Taxonomy" id="204773"/>
    <lineage>
        <taxon>Bacteria</taxon>
        <taxon>Pseudomonadati</taxon>
        <taxon>Pseudomonadota</taxon>
        <taxon>Betaproteobacteria</taxon>
        <taxon>Burkholderiales</taxon>
        <taxon>Oxalobacteraceae</taxon>
        <taxon>Herminiimonas</taxon>
    </lineage>
</organism>
<name>PNP_HERAR</name>
<feature type="chain" id="PRO_0000329681" description="Polyribonucleotide nucleotidyltransferase">
    <location>
        <begin position="1"/>
        <end position="710"/>
    </location>
</feature>
<feature type="domain" description="KH" evidence="1">
    <location>
        <begin position="559"/>
        <end position="618"/>
    </location>
</feature>
<feature type="domain" description="S1 motif" evidence="1">
    <location>
        <begin position="628"/>
        <end position="696"/>
    </location>
</feature>
<feature type="binding site" evidence="1">
    <location>
        <position position="491"/>
    </location>
    <ligand>
        <name>Mg(2+)</name>
        <dbReference type="ChEBI" id="CHEBI:18420"/>
    </ligand>
</feature>
<feature type="binding site" evidence="1">
    <location>
        <position position="497"/>
    </location>
    <ligand>
        <name>Mg(2+)</name>
        <dbReference type="ChEBI" id="CHEBI:18420"/>
    </ligand>
</feature>
<evidence type="ECO:0000255" key="1">
    <source>
        <dbReference type="HAMAP-Rule" id="MF_01595"/>
    </source>
</evidence>
<proteinExistence type="inferred from homology"/>
<protein>
    <recommendedName>
        <fullName evidence="1">Polyribonucleotide nucleotidyltransferase</fullName>
        <ecNumber evidence="1">2.7.7.8</ecNumber>
    </recommendedName>
    <alternativeName>
        <fullName evidence="1">Polynucleotide phosphorylase</fullName>
        <shortName evidence="1">PNPase</shortName>
    </alternativeName>
</protein>
<dbReference type="EC" id="2.7.7.8" evidence="1"/>
<dbReference type="EMBL" id="CU207211">
    <property type="protein sequence ID" value="CAL61984.1"/>
    <property type="molecule type" value="Genomic_DNA"/>
</dbReference>
<dbReference type="SMR" id="A4G647"/>
<dbReference type="STRING" id="204773.HEAR1829"/>
<dbReference type="KEGG" id="har:HEAR1829"/>
<dbReference type="eggNOG" id="COG1185">
    <property type="taxonomic scope" value="Bacteria"/>
</dbReference>
<dbReference type="HOGENOM" id="CLU_004217_2_2_4"/>
<dbReference type="OrthoDB" id="9804305at2"/>
<dbReference type="Proteomes" id="UP000006697">
    <property type="component" value="Chromosome"/>
</dbReference>
<dbReference type="GO" id="GO:0005829">
    <property type="term" value="C:cytosol"/>
    <property type="evidence" value="ECO:0007669"/>
    <property type="project" value="TreeGrafter"/>
</dbReference>
<dbReference type="GO" id="GO:0000175">
    <property type="term" value="F:3'-5'-RNA exonuclease activity"/>
    <property type="evidence" value="ECO:0007669"/>
    <property type="project" value="TreeGrafter"/>
</dbReference>
<dbReference type="GO" id="GO:0000287">
    <property type="term" value="F:magnesium ion binding"/>
    <property type="evidence" value="ECO:0007669"/>
    <property type="project" value="UniProtKB-UniRule"/>
</dbReference>
<dbReference type="GO" id="GO:0004654">
    <property type="term" value="F:polyribonucleotide nucleotidyltransferase activity"/>
    <property type="evidence" value="ECO:0007669"/>
    <property type="project" value="UniProtKB-UniRule"/>
</dbReference>
<dbReference type="GO" id="GO:0003723">
    <property type="term" value="F:RNA binding"/>
    <property type="evidence" value="ECO:0007669"/>
    <property type="project" value="UniProtKB-UniRule"/>
</dbReference>
<dbReference type="GO" id="GO:0006402">
    <property type="term" value="P:mRNA catabolic process"/>
    <property type="evidence" value="ECO:0007669"/>
    <property type="project" value="UniProtKB-UniRule"/>
</dbReference>
<dbReference type="GO" id="GO:0006396">
    <property type="term" value="P:RNA processing"/>
    <property type="evidence" value="ECO:0007669"/>
    <property type="project" value="InterPro"/>
</dbReference>
<dbReference type="CDD" id="cd02393">
    <property type="entry name" value="KH-I_PNPase"/>
    <property type="match status" value="1"/>
</dbReference>
<dbReference type="CDD" id="cd11363">
    <property type="entry name" value="RNase_PH_PNPase_1"/>
    <property type="match status" value="1"/>
</dbReference>
<dbReference type="CDD" id="cd11364">
    <property type="entry name" value="RNase_PH_PNPase_2"/>
    <property type="match status" value="1"/>
</dbReference>
<dbReference type="CDD" id="cd04472">
    <property type="entry name" value="S1_PNPase"/>
    <property type="match status" value="1"/>
</dbReference>
<dbReference type="FunFam" id="2.40.50.140:FF:000023">
    <property type="entry name" value="Polyribonucleotide nucleotidyltransferase"/>
    <property type="match status" value="1"/>
</dbReference>
<dbReference type="FunFam" id="3.30.1370.10:FF:000001">
    <property type="entry name" value="Polyribonucleotide nucleotidyltransferase"/>
    <property type="match status" value="1"/>
</dbReference>
<dbReference type="FunFam" id="3.30.230.70:FF:000001">
    <property type="entry name" value="Polyribonucleotide nucleotidyltransferase"/>
    <property type="match status" value="1"/>
</dbReference>
<dbReference type="FunFam" id="3.30.230.70:FF:000002">
    <property type="entry name" value="Polyribonucleotide nucleotidyltransferase"/>
    <property type="match status" value="1"/>
</dbReference>
<dbReference type="Gene3D" id="3.30.230.70">
    <property type="entry name" value="GHMP Kinase, N-terminal domain"/>
    <property type="match status" value="2"/>
</dbReference>
<dbReference type="Gene3D" id="3.30.1370.10">
    <property type="entry name" value="K Homology domain, type 1"/>
    <property type="match status" value="1"/>
</dbReference>
<dbReference type="Gene3D" id="2.40.50.140">
    <property type="entry name" value="Nucleic acid-binding proteins"/>
    <property type="match status" value="1"/>
</dbReference>
<dbReference type="HAMAP" id="MF_01595">
    <property type="entry name" value="PNPase"/>
    <property type="match status" value="1"/>
</dbReference>
<dbReference type="InterPro" id="IPR001247">
    <property type="entry name" value="ExoRNase_PH_dom1"/>
</dbReference>
<dbReference type="InterPro" id="IPR015847">
    <property type="entry name" value="ExoRNase_PH_dom2"/>
</dbReference>
<dbReference type="InterPro" id="IPR036345">
    <property type="entry name" value="ExoRNase_PH_dom2_sf"/>
</dbReference>
<dbReference type="InterPro" id="IPR004087">
    <property type="entry name" value="KH_dom"/>
</dbReference>
<dbReference type="InterPro" id="IPR004088">
    <property type="entry name" value="KH_dom_type_1"/>
</dbReference>
<dbReference type="InterPro" id="IPR036612">
    <property type="entry name" value="KH_dom_type_1_sf"/>
</dbReference>
<dbReference type="InterPro" id="IPR012340">
    <property type="entry name" value="NA-bd_OB-fold"/>
</dbReference>
<dbReference type="InterPro" id="IPR012162">
    <property type="entry name" value="PNPase"/>
</dbReference>
<dbReference type="InterPro" id="IPR027408">
    <property type="entry name" value="PNPase/RNase_PH_dom_sf"/>
</dbReference>
<dbReference type="InterPro" id="IPR015848">
    <property type="entry name" value="PNPase_PH_RNA-bd_bac/org-type"/>
</dbReference>
<dbReference type="InterPro" id="IPR020568">
    <property type="entry name" value="Ribosomal_Su5_D2-typ_SF"/>
</dbReference>
<dbReference type="InterPro" id="IPR003029">
    <property type="entry name" value="S1_domain"/>
</dbReference>
<dbReference type="NCBIfam" id="TIGR03591">
    <property type="entry name" value="polynuc_phos"/>
    <property type="match status" value="1"/>
</dbReference>
<dbReference type="NCBIfam" id="NF008805">
    <property type="entry name" value="PRK11824.1"/>
    <property type="match status" value="1"/>
</dbReference>
<dbReference type="PANTHER" id="PTHR11252">
    <property type="entry name" value="POLYRIBONUCLEOTIDE NUCLEOTIDYLTRANSFERASE"/>
    <property type="match status" value="1"/>
</dbReference>
<dbReference type="PANTHER" id="PTHR11252:SF0">
    <property type="entry name" value="POLYRIBONUCLEOTIDE NUCLEOTIDYLTRANSFERASE 1, MITOCHONDRIAL"/>
    <property type="match status" value="1"/>
</dbReference>
<dbReference type="Pfam" id="PF00013">
    <property type="entry name" value="KH_1"/>
    <property type="match status" value="1"/>
</dbReference>
<dbReference type="Pfam" id="PF03726">
    <property type="entry name" value="PNPase"/>
    <property type="match status" value="1"/>
</dbReference>
<dbReference type="Pfam" id="PF01138">
    <property type="entry name" value="RNase_PH"/>
    <property type="match status" value="2"/>
</dbReference>
<dbReference type="Pfam" id="PF03725">
    <property type="entry name" value="RNase_PH_C"/>
    <property type="match status" value="2"/>
</dbReference>
<dbReference type="Pfam" id="PF00575">
    <property type="entry name" value="S1"/>
    <property type="match status" value="1"/>
</dbReference>
<dbReference type="PIRSF" id="PIRSF005499">
    <property type="entry name" value="PNPase"/>
    <property type="match status" value="1"/>
</dbReference>
<dbReference type="SMART" id="SM00322">
    <property type="entry name" value="KH"/>
    <property type="match status" value="1"/>
</dbReference>
<dbReference type="SMART" id="SM00316">
    <property type="entry name" value="S1"/>
    <property type="match status" value="1"/>
</dbReference>
<dbReference type="SUPFAM" id="SSF54791">
    <property type="entry name" value="Eukaryotic type KH-domain (KH-domain type I)"/>
    <property type="match status" value="1"/>
</dbReference>
<dbReference type="SUPFAM" id="SSF50249">
    <property type="entry name" value="Nucleic acid-binding proteins"/>
    <property type="match status" value="1"/>
</dbReference>
<dbReference type="SUPFAM" id="SSF55666">
    <property type="entry name" value="Ribonuclease PH domain 2-like"/>
    <property type="match status" value="2"/>
</dbReference>
<dbReference type="SUPFAM" id="SSF54211">
    <property type="entry name" value="Ribosomal protein S5 domain 2-like"/>
    <property type="match status" value="2"/>
</dbReference>
<dbReference type="PROSITE" id="PS50084">
    <property type="entry name" value="KH_TYPE_1"/>
    <property type="match status" value="1"/>
</dbReference>
<dbReference type="PROSITE" id="PS50126">
    <property type="entry name" value="S1"/>
    <property type="match status" value="1"/>
</dbReference>
<sequence>MFNKVTKTFQYGQHTVTLETGEIARQASGAVLVSIEDTVVLATVVARKDAKPGQDFFPLTVDYVEKTYAAGRIPGGFFKREGRPSEKETLTSRLIDRPIRPLFPEGYLNEVQIIIHVMSVNPEIDPDIAAMIGASAALSVSGIPFAGPLGAARVGYIDGQYILNPTATQLKTSQMDLVVAGTEAAVLMVESEAQQLSEEVMLGAVVFGHDQMKAVIDAIHDLVRDGGKPEVQWAPPAKNEALIARVAHFAEEKLRAAYQTKDKQARTAKLKDAFAEVNAEVAAEATSVGGAAPDTSEVGNILFDLEAKIVRSQILDGEPRIDGRDTRTVRPITIRTGVLPRTHGSALFTRGETQALVIATLGTARDEQKIDALMGEYSDRFMLHYNMPPFATGETGRVGTPKRREIGHGRLAKRALIAALPAPEDFSYSVRLVSEITESNGSSSMASVCGGCLALMDAGVPMQAHVAGIAMGLIKDGGKFAVLSDILGDEDHLGDMDFKVAGTANGITALQMDIKIQGITKEIMQVALAQAKEGRIHILGEMEKAVPSGTTGELSDFAPRLITIKINPEKIRDVIGKGGAVIRALTEETGTQIDISDEGVVTIASVDAAAGQEAKRRIEELTASVEVGKVYEGTVLKLLDFGAIVQVMPGKDGLLHISQIANERVNAVADYLKEGQQVRVKVLETDDRGRLKLSMKAALAEDNPEAAPQE</sequence>
<accession>A4G647</accession>
<keyword id="KW-0963">Cytoplasm</keyword>
<keyword id="KW-0460">Magnesium</keyword>
<keyword id="KW-0479">Metal-binding</keyword>
<keyword id="KW-0548">Nucleotidyltransferase</keyword>
<keyword id="KW-1185">Reference proteome</keyword>
<keyword id="KW-0694">RNA-binding</keyword>
<keyword id="KW-0808">Transferase</keyword>